<reference key="1">
    <citation type="journal article" date="1998" name="Mol. Cells">
        <title>Molecular characterization of a cDNA encoding chloroplastic fructose-1,6-bisphosphatase from soybean (Glycine max L.).</title>
        <authorList>
            <person name="Jeon Y.H."/>
            <person name="Bhoo S.H."/>
            <person name="Hahn T.R."/>
        </authorList>
    </citation>
    <scope>NUCLEOTIDE SEQUENCE [MRNA]</scope>
    <source>
        <strain>cv. Jinhung</strain>
        <tissue>Leaf</tissue>
    </source>
</reference>
<feature type="transit peptide" description="Chloroplast" evidence="2">
    <location>
        <begin position="1"/>
        <end position="50"/>
    </location>
</feature>
<feature type="chain" id="PRO_0000008819" description="Fructose-1,6-bisphosphatase, chloroplastic">
    <location>
        <begin position="51"/>
        <end position="402"/>
    </location>
</feature>
<feature type="binding site" evidence="1">
    <location>
        <position position="127"/>
    </location>
    <ligand>
        <name>Mg(2+)</name>
        <dbReference type="ChEBI" id="CHEBI:18420"/>
        <label>1</label>
    </ligand>
</feature>
<feature type="binding site" evidence="1">
    <location>
        <position position="156"/>
    </location>
    <ligand>
        <name>Mg(2+)</name>
        <dbReference type="ChEBI" id="CHEBI:18420"/>
        <label>1</label>
    </ligand>
</feature>
<feature type="binding site" evidence="1">
    <location>
        <position position="156"/>
    </location>
    <ligand>
        <name>Mg(2+)</name>
        <dbReference type="ChEBI" id="CHEBI:18420"/>
        <label>2</label>
    </ligand>
</feature>
<feature type="binding site" evidence="1">
    <location>
        <position position="177"/>
    </location>
    <ligand>
        <name>Mg(2+)</name>
        <dbReference type="ChEBI" id="CHEBI:18420"/>
        <label>2</label>
    </ligand>
</feature>
<feature type="binding site" evidence="1">
    <location>
        <position position="177"/>
    </location>
    <ligand>
        <name>Mg(2+)</name>
        <dbReference type="ChEBI" id="CHEBI:18420"/>
        <label>3</label>
    </ligand>
</feature>
<feature type="binding site" evidence="1">
    <location>
        <position position="179"/>
    </location>
    <ligand>
        <name>Mg(2+)</name>
        <dbReference type="ChEBI" id="CHEBI:18420"/>
        <label>2</label>
    </ligand>
</feature>
<feature type="binding site" evidence="1">
    <location>
        <begin position="180"/>
        <end position="183"/>
    </location>
    <ligand>
        <name>substrate</name>
    </ligand>
</feature>
<feature type="binding site" evidence="1">
    <location>
        <position position="180"/>
    </location>
    <ligand>
        <name>Mg(2+)</name>
        <dbReference type="ChEBI" id="CHEBI:18420"/>
        <label>3</label>
    </ligand>
</feature>
<feature type="binding site" evidence="1">
    <location>
        <position position="285"/>
    </location>
    <ligand>
        <name>substrate</name>
    </ligand>
</feature>
<feature type="binding site" evidence="1">
    <location>
        <position position="317"/>
    </location>
    <ligand>
        <name>substrate</name>
    </ligand>
</feature>
<feature type="binding site" evidence="1">
    <location>
        <position position="335"/>
    </location>
    <ligand>
        <name>substrate</name>
    </ligand>
</feature>
<feature type="binding site" evidence="1">
    <location>
        <position position="337"/>
    </location>
    <ligand>
        <name>substrate</name>
    </ligand>
</feature>
<feature type="binding site" evidence="1">
    <location>
        <position position="347"/>
    </location>
    <ligand>
        <name>substrate</name>
    </ligand>
</feature>
<feature type="binding site" evidence="1">
    <location>
        <position position="353"/>
    </location>
    <ligand>
        <name>Mg(2+)</name>
        <dbReference type="ChEBI" id="CHEBI:18420"/>
        <label>3</label>
    </ligand>
</feature>
<feature type="disulfide bond" description="Redox-active (light-modulated)" evidence="1">
    <location>
        <begin position="221"/>
        <end position="226"/>
    </location>
</feature>
<evidence type="ECO:0000250" key="1"/>
<evidence type="ECO:0000255" key="2"/>
<evidence type="ECO:0000305" key="3"/>
<proteinExistence type="evidence at transcript level"/>
<name>F16P1_SOYBN</name>
<gene>
    <name type="primary">FBP</name>
</gene>
<organism>
    <name type="scientific">Glycine max</name>
    <name type="common">Soybean</name>
    <name type="synonym">Glycine hispida</name>
    <dbReference type="NCBI Taxonomy" id="3847"/>
    <lineage>
        <taxon>Eukaryota</taxon>
        <taxon>Viridiplantae</taxon>
        <taxon>Streptophyta</taxon>
        <taxon>Embryophyta</taxon>
        <taxon>Tracheophyta</taxon>
        <taxon>Spermatophyta</taxon>
        <taxon>Magnoliopsida</taxon>
        <taxon>eudicotyledons</taxon>
        <taxon>Gunneridae</taxon>
        <taxon>Pentapetalae</taxon>
        <taxon>rosids</taxon>
        <taxon>fabids</taxon>
        <taxon>Fabales</taxon>
        <taxon>Fabaceae</taxon>
        <taxon>Papilionoideae</taxon>
        <taxon>50 kb inversion clade</taxon>
        <taxon>NPAAA clade</taxon>
        <taxon>indigoferoid/millettioid clade</taxon>
        <taxon>Phaseoleae</taxon>
        <taxon>Glycine</taxon>
        <taxon>Glycine subgen. Soja</taxon>
    </lineage>
</organism>
<dbReference type="EC" id="3.1.3.11"/>
<dbReference type="EMBL" id="L34841">
    <property type="protein sequence ID" value="AAA33956.1"/>
    <property type="molecule type" value="mRNA"/>
</dbReference>
<dbReference type="PIR" id="T07134">
    <property type="entry name" value="T07134"/>
</dbReference>
<dbReference type="SMR" id="Q42796"/>
<dbReference type="FunCoup" id="Q42796">
    <property type="interactions" value="2236"/>
</dbReference>
<dbReference type="STRING" id="3847.Q42796"/>
<dbReference type="PaxDb" id="3847-GLYMA07G17180.1"/>
<dbReference type="eggNOG" id="KOG1458">
    <property type="taxonomic scope" value="Eukaryota"/>
</dbReference>
<dbReference type="HOGENOM" id="CLU_039977_1_0_1"/>
<dbReference type="InParanoid" id="Q42796"/>
<dbReference type="UniPathway" id="UPA00116"/>
<dbReference type="Proteomes" id="UP000008827">
    <property type="component" value="Unplaced"/>
</dbReference>
<dbReference type="GO" id="GO:0009507">
    <property type="term" value="C:chloroplast"/>
    <property type="evidence" value="ECO:0007669"/>
    <property type="project" value="UniProtKB-SubCell"/>
</dbReference>
<dbReference type="GO" id="GO:0005737">
    <property type="term" value="C:cytoplasm"/>
    <property type="evidence" value="ECO:0000318"/>
    <property type="project" value="GO_Central"/>
</dbReference>
<dbReference type="GO" id="GO:0005829">
    <property type="term" value="C:cytosol"/>
    <property type="evidence" value="ECO:0000318"/>
    <property type="project" value="GO_Central"/>
</dbReference>
<dbReference type="GO" id="GO:0042132">
    <property type="term" value="F:fructose 1,6-bisphosphate 1-phosphatase activity"/>
    <property type="evidence" value="ECO:0000318"/>
    <property type="project" value="GO_Central"/>
</dbReference>
<dbReference type="GO" id="GO:0046872">
    <property type="term" value="F:metal ion binding"/>
    <property type="evidence" value="ECO:0007669"/>
    <property type="project" value="UniProtKB-KW"/>
</dbReference>
<dbReference type="GO" id="GO:0030388">
    <property type="term" value="P:fructose 1,6-bisphosphate metabolic process"/>
    <property type="evidence" value="ECO:0000318"/>
    <property type="project" value="GO_Central"/>
</dbReference>
<dbReference type="GO" id="GO:0006002">
    <property type="term" value="P:fructose 6-phosphate metabolic process"/>
    <property type="evidence" value="ECO:0000318"/>
    <property type="project" value="GO_Central"/>
</dbReference>
<dbReference type="GO" id="GO:0006000">
    <property type="term" value="P:fructose metabolic process"/>
    <property type="evidence" value="ECO:0000318"/>
    <property type="project" value="GO_Central"/>
</dbReference>
<dbReference type="GO" id="GO:0006094">
    <property type="term" value="P:gluconeogenesis"/>
    <property type="evidence" value="ECO:0000318"/>
    <property type="project" value="GO_Central"/>
</dbReference>
<dbReference type="GO" id="GO:0019253">
    <property type="term" value="P:reductive pentose-phosphate cycle"/>
    <property type="evidence" value="ECO:0007669"/>
    <property type="project" value="UniProtKB-UniPathway"/>
</dbReference>
<dbReference type="CDD" id="cd00354">
    <property type="entry name" value="FBPase"/>
    <property type="match status" value="1"/>
</dbReference>
<dbReference type="FunFam" id="3.40.190.80:FF:000001">
    <property type="entry name" value="Fructose-1,6-bisphosphatase class 1"/>
    <property type="match status" value="1"/>
</dbReference>
<dbReference type="FunFam" id="3.30.540.10:FF:000014">
    <property type="entry name" value="Fructose-1,6-bisphosphatase, chloroplastic"/>
    <property type="match status" value="1"/>
</dbReference>
<dbReference type="Gene3D" id="3.40.190.80">
    <property type="match status" value="1"/>
</dbReference>
<dbReference type="Gene3D" id="3.30.540.10">
    <property type="entry name" value="Fructose-1,6-Bisphosphatase, subunit A, domain 1"/>
    <property type="match status" value="1"/>
</dbReference>
<dbReference type="HAMAP" id="MF_01855">
    <property type="entry name" value="FBPase_class1"/>
    <property type="match status" value="1"/>
</dbReference>
<dbReference type="InterPro" id="IPR044015">
    <property type="entry name" value="FBPase_C_dom"/>
</dbReference>
<dbReference type="InterPro" id="IPR000146">
    <property type="entry name" value="FBPase_class-1"/>
</dbReference>
<dbReference type="InterPro" id="IPR033391">
    <property type="entry name" value="FBPase_N"/>
</dbReference>
<dbReference type="InterPro" id="IPR028343">
    <property type="entry name" value="FBPtase"/>
</dbReference>
<dbReference type="PANTHER" id="PTHR11556">
    <property type="entry name" value="FRUCTOSE-1,6-BISPHOSPHATASE-RELATED"/>
    <property type="match status" value="1"/>
</dbReference>
<dbReference type="PANTHER" id="PTHR11556:SF1">
    <property type="entry name" value="FRUCTOSE-BISPHOSPHATASE"/>
    <property type="match status" value="1"/>
</dbReference>
<dbReference type="Pfam" id="PF00316">
    <property type="entry name" value="FBPase"/>
    <property type="match status" value="1"/>
</dbReference>
<dbReference type="Pfam" id="PF18913">
    <property type="entry name" value="FBPase_C"/>
    <property type="match status" value="1"/>
</dbReference>
<dbReference type="PIRSF" id="PIRSF500210">
    <property type="entry name" value="FBPtase"/>
    <property type="match status" value="1"/>
</dbReference>
<dbReference type="PIRSF" id="PIRSF000904">
    <property type="entry name" value="FBPtase_SBPase"/>
    <property type="match status" value="1"/>
</dbReference>
<dbReference type="PRINTS" id="PR00115">
    <property type="entry name" value="F16BPHPHTASE"/>
</dbReference>
<dbReference type="SUPFAM" id="SSF56655">
    <property type="entry name" value="Carbohydrate phosphatase"/>
    <property type="match status" value="1"/>
</dbReference>
<comment type="catalytic activity">
    <reaction>
        <text>beta-D-fructose 1,6-bisphosphate + H2O = beta-D-fructose 6-phosphate + phosphate</text>
        <dbReference type="Rhea" id="RHEA:11064"/>
        <dbReference type="ChEBI" id="CHEBI:15377"/>
        <dbReference type="ChEBI" id="CHEBI:32966"/>
        <dbReference type="ChEBI" id="CHEBI:43474"/>
        <dbReference type="ChEBI" id="CHEBI:57634"/>
        <dbReference type="EC" id="3.1.3.11"/>
    </reaction>
</comment>
<comment type="cofactor">
    <cofactor evidence="1">
        <name>Mg(2+)</name>
        <dbReference type="ChEBI" id="CHEBI:18420"/>
    </cofactor>
    <text evidence="1">Binds 3 Mg(2+) ions per subunit.</text>
</comment>
<comment type="pathway">
    <text>Carbohydrate biosynthesis; Calvin cycle.</text>
</comment>
<comment type="subunit">
    <text evidence="1">Homotetramer.</text>
</comment>
<comment type="subcellular location">
    <subcellularLocation>
        <location>Plastid</location>
        <location>Chloroplast</location>
    </subcellularLocation>
</comment>
<comment type="induction">
    <text evidence="1">Light activation through pH changes, Mg(2+) levels and also by light-modulated reduction of essential disulfide groups via the ferredoxin-thioredoxin f system.</text>
</comment>
<comment type="miscellaneous">
    <text>In plants there are two FBPase isozymes: one in the cytosol and the other in the chloroplast.</text>
</comment>
<comment type="similarity">
    <text evidence="3">Belongs to the FBPase class 1 family.</text>
</comment>
<accession>Q42796</accession>
<keyword id="KW-0113">Calvin cycle</keyword>
<keyword id="KW-0119">Carbohydrate metabolism</keyword>
<keyword id="KW-0150">Chloroplast</keyword>
<keyword id="KW-1015">Disulfide bond</keyword>
<keyword id="KW-0378">Hydrolase</keyword>
<keyword id="KW-0460">Magnesium</keyword>
<keyword id="KW-0479">Metal-binding</keyword>
<keyword id="KW-0934">Plastid</keyword>
<keyword id="KW-1185">Reference proteome</keyword>
<keyword id="KW-0809">Transit peptide</keyword>
<protein>
    <recommendedName>
        <fullName>Fructose-1,6-bisphosphatase, chloroplastic</fullName>
        <shortName>FBPase</shortName>
        <ecNumber>3.1.3.11</ecNumber>
    </recommendedName>
    <alternativeName>
        <fullName>D-fructose-1,6-bisphosphate 1-phosphohydrolase</fullName>
    </alternativeName>
</protein>
<sequence>MAAATASTQLIFSKPCSPSRLCPFQLCVFDTKQVLSSGRRRHVGGSGVRCMAVGEAATTGTKKRSGYELQTLTSWLLKQEQAGVIDAELTIVLSSISMACKQIASLVQRANISNLTGVQGAVNVQGEDQKKLDVVSNEVFSNCLRSSGRTGIIASEEEDVPVAVEESYSGNYIVVFDPLDGSSNIDAAASTGSNFWIYSPNDECLADIDDDPTLDTTEQRCIVNVCQPGSNLLAAGYCMYSSSIIFVLTLGNGVFVFTLDPMYGEFVLTQENLQIPRAGKIYAFNEGNYQLWDEKLKKYIDDLKDPGQSGKPYSARYIGSLVGDFHRTLLYGGIYGYPRDKKSKNGKLRLLYECAPINFIVEQAGGKGTDGLQVLRLQGTEIHQRVPLYIGEEVEKVEKYLA</sequence>